<comment type="function">
    <text evidence="1">Binds to sodium channels (Nav) and affects the channel activation process.</text>
</comment>
<comment type="subunit">
    <text evidence="2">Toxin b is a heterodimer composed of toxin alpha and toxin beta.</text>
</comment>
<comment type="subcellular location">
    <subcellularLocation>
        <location>Secreted</location>
    </subcellularLocation>
</comment>
<comment type="tissue specificity">
    <text>Expressed by the venom gland.</text>
</comment>
<protein>
    <recommendedName>
        <fullName>Toxin b subunit beta</fullName>
    </recommendedName>
</protein>
<sequence>ADVPGNYPLNSYGASYYCTI</sequence>
<keyword id="KW-0903">Direct protein sequencing</keyword>
<keyword id="KW-0872">Ion channel impairing toxin</keyword>
<keyword id="KW-0528">Neurotoxin</keyword>
<keyword id="KW-0964">Secreted</keyword>
<keyword id="KW-0800">Toxin</keyword>
<keyword id="KW-0738">Voltage-gated sodium channel impairing toxin</keyword>
<name>TXBB_ANDCR</name>
<dbReference type="GO" id="GO:0005576">
    <property type="term" value="C:extracellular region"/>
    <property type="evidence" value="ECO:0007669"/>
    <property type="project" value="UniProtKB-SubCell"/>
</dbReference>
<dbReference type="GO" id="GO:0017080">
    <property type="term" value="F:sodium channel regulator activity"/>
    <property type="evidence" value="ECO:0007669"/>
    <property type="project" value="UniProtKB-KW"/>
</dbReference>
<dbReference type="GO" id="GO:0090729">
    <property type="term" value="F:toxin activity"/>
    <property type="evidence" value="ECO:0007669"/>
    <property type="project" value="UniProtKB-KW"/>
</dbReference>
<organism>
    <name type="scientific">Androctonus crassicauda</name>
    <name type="common">Arabian fat-tailed scorpion</name>
    <dbReference type="NCBI Taxonomy" id="122909"/>
    <lineage>
        <taxon>Eukaryota</taxon>
        <taxon>Metazoa</taxon>
        <taxon>Ecdysozoa</taxon>
        <taxon>Arthropoda</taxon>
        <taxon>Chelicerata</taxon>
        <taxon>Arachnida</taxon>
        <taxon>Scorpiones</taxon>
        <taxon>Buthida</taxon>
        <taxon>Buthoidea</taxon>
        <taxon>Buthidae</taxon>
        <taxon>Androctonus</taxon>
    </lineage>
</organism>
<evidence type="ECO:0000250" key="1"/>
<evidence type="ECO:0000269" key="2">
    <source>
    </source>
</evidence>
<reference key="1">
    <citation type="journal article" date="2006" name="Toxicon">
        <title>Characterization of venom components from the scorpion Androctonus crassicauda of Turkey: peptides and genes.</title>
        <authorList>
            <person name="Caliskan F."/>
            <person name="Garcia B.I."/>
            <person name="Coronas F.I.V."/>
            <person name="Batista C.V.F."/>
            <person name="Zamudio F.Z."/>
            <person name="Possani L.D."/>
        </authorList>
    </citation>
    <scope>PROTEIN SEQUENCE</scope>
    <scope>SUBUNIT</scope>
    <source>
        <tissue>Venom</tissue>
    </source>
</reference>
<accession>P0C2A3</accession>
<proteinExistence type="evidence at protein level"/>
<feature type="chain" id="PRO_0000271330" description="Toxin b subunit beta">
    <location>
        <begin position="1"/>
        <end position="20" status="greater than"/>
    </location>
</feature>
<feature type="non-terminal residue">
    <location>
        <position position="20"/>
    </location>
</feature>